<comment type="function">
    <text evidence="1">Aspartyl-tRNA synthetase with relaxed tRNA specificity since it is able to aspartylate not only its cognate tRNA(Asp) but also tRNA(Asn). Reaction proceeds in two steps: L-aspartate is first activated by ATP to form Asp-AMP and then transferred to the acceptor end of tRNA(Asp/Asn).</text>
</comment>
<comment type="catalytic activity">
    <reaction evidence="1">
        <text>tRNA(Asx) + L-aspartate + ATP = L-aspartyl-tRNA(Asx) + AMP + diphosphate</text>
        <dbReference type="Rhea" id="RHEA:18349"/>
        <dbReference type="Rhea" id="RHEA-COMP:9710"/>
        <dbReference type="Rhea" id="RHEA-COMP:9711"/>
        <dbReference type="ChEBI" id="CHEBI:29991"/>
        <dbReference type="ChEBI" id="CHEBI:30616"/>
        <dbReference type="ChEBI" id="CHEBI:33019"/>
        <dbReference type="ChEBI" id="CHEBI:78442"/>
        <dbReference type="ChEBI" id="CHEBI:78516"/>
        <dbReference type="ChEBI" id="CHEBI:456215"/>
        <dbReference type="EC" id="6.1.1.23"/>
    </reaction>
</comment>
<comment type="subunit">
    <text evidence="1">Homodimer.</text>
</comment>
<comment type="subcellular location">
    <subcellularLocation>
        <location evidence="1">Cytoplasm</location>
    </subcellularLocation>
</comment>
<comment type="similarity">
    <text evidence="1">Belongs to the class-II aminoacyl-tRNA synthetase family. Type 1 subfamily.</text>
</comment>
<reference key="1">
    <citation type="journal article" date="2005" name="PLoS Biol.">
        <title>Major structural differences and novel potential virulence mechanisms from the genomes of multiple Campylobacter species.</title>
        <authorList>
            <person name="Fouts D.E."/>
            <person name="Mongodin E.F."/>
            <person name="Mandrell R.E."/>
            <person name="Miller W.G."/>
            <person name="Rasko D.A."/>
            <person name="Ravel J."/>
            <person name="Brinkac L.M."/>
            <person name="DeBoy R.T."/>
            <person name="Parker C.T."/>
            <person name="Daugherty S.C."/>
            <person name="Dodson R.J."/>
            <person name="Durkin A.S."/>
            <person name="Madupu R."/>
            <person name="Sullivan S.A."/>
            <person name="Shetty J.U."/>
            <person name="Ayodeji M.A."/>
            <person name="Shvartsbeyn A."/>
            <person name="Schatz M.C."/>
            <person name="Badger J.H."/>
            <person name="Fraser C.M."/>
            <person name="Nelson K.E."/>
        </authorList>
    </citation>
    <scope>NUCLEOTIDE SEQUENCE [LARGE SCALE GENOMIC DNA]</scope>
    <source>
        <strain>RM1221</strain>
    </source>
</reference>
<evidence type="ECO:0000255" key="1">
    <source>
        <dbReference type="HAMAP-Rule" id="MF_00044"/>
    </source>
</evidence>
<sequence>MRSHYNTDLGISHVGQSVKLCGWVNSYRDHGGVIFIDLRDRSGIIQLVCDPNDSKEAHEIASNARNEFVLIAEGTIRPRGEGLINPKLKTGEIEVVVSKLTIENESAVPPFAIADESVNEELRLKYRFLDLRNPKLYENFALRSKACIAARNSLANMGFLEVETPILTKATPEGARDYLVPSRVHQGEFYALPQSPQLFKQLLMCSGFDRYFQIAKCFRDEDLRADRQPEFTQIDIEMSFCEQKDVINVAETFLKDIFKACGKEIQTPFRQMQYKDAMENYGSDKPDLRFNLKFIDVIDIFAKSNNEIFANIAKDTKKNRIKAIRVPKGDTIFSKRQMQRFEEFVRKFGAQGLAFIQVKEDGLKGPLCKFFSEEDLNELSKRCELEVGDVVFFGAGAKKTVLDYMGRFRIFLANELKLIDPNALEFLWVVDFPMFEQNDDGSYSAMHHPFTMPKNIDETDLEEISSIAYDVVLNGVELGGGSIRIHKNDIQQKVFKLLNIDEEQQKEKFGFLLDALSFGAPPHGGIAIGLDRLIMLVTGANNIREVIAFPKTQRAQCLMTDAPSPASNEAMRELGIKLRENIK</sequence>
<proteinExistence type="inferred from homology"/>
<organism>
    <name type="scientific">Campylobacter jejuni (strain RM1221)</name>
    <dbReference type="NCBI Taxonomy" id="195099"/>
    <lineage>
        <taxon>Bacteria</taxon>
        <taxon>Pseudomonadati</taxon>
        <taxon>Campylobacterota</taxon>
        <taxon>Epsilonproteobacteria</taxon>
        <taxon>Campylobacterales</taxon>
        <taxon>Campylobacteraceae</taxon>
        <taxon>Campylobacter</taxon>
    </lineage>
</organism>
<protein>
    <recommendedName>
        <fullName evidence="1">Aspartate--tRNA(Asp/Asn) ligase</fullName>
        <ecNumber evidence="1">6.1.1.23</ecNumber>
    </recommendedName>
    <alternativeName>
        <fullName evidence="1">Aspartyl-tRNA synthetase</fullName>
        <shortName evidence="1">AspRS</shortName>
    </alternativeName>
    <alternativeName>
        <fullName evidence="1">Non-discriminating aspartyl-tRNA synthetase</fullName>
        <shortName evidence="1">ND-AspRS</shortName>
    </alternativeName>
</protein>
<keyword id="KW-0030">Aminoacyl-tRNA synthetase</keyword>
<keyword id="KW-0067">ATP-binding</keyword>
<keyword id="KW-0963">Cytoplasm</keyword>
<keyword id="KW-0436">Ligase</keyword>
<keyword id="KW-0547">Nucleotide-binding</keyword>
<keyword id="KW-0648">Protein biosynthesis</keyword>
<feature type="chain" id="PRO_0000110849" description="Aspartate--tRNA(Asp/Asn) ligase">
    <location>
        <begin position="1"/>
        <end position="583"/>
    </location>
</feature>
<feature type="region of interest" description="Aspartate" evidence="1">
    <location>
        <begin position="197"/>
        <end position="200"/>
    </location>
</feature>
<feature type="binding site" evidence="1">
    <location>
        <position position="173"/>
    </location>
    <ligand>
        <name>L-aspartate</name>
        <dbReference type="ChEBI" id="CHEBI:29991"/>
    </ligand>
</feature>
<feature type="binding site" evidence="1">
    <location>
        <begin position="219"/>
        <end position="221"/>
    </location>
    <ligand>
        <name>ATP</name>
        <dbReference type="ChEBI" id="CHEBI:30616"/>
    </ligand>
</feature>
<feature type="binding site" evidence="1">
    <location>
        <position position="219"/>
    </location>
    <ligand>
        <name>L-aspartate</name>
        <dbReference type="ChEBI" id="CHEBI:29991"/>
    </ligand>
</feature>
<feature type="binding site" evidence="1">
    <location>
        <position position="228"/>
    </location>
    <ligand>
        <name>ATP</name>
        <dbReference type="ChEBI" id="CHEBI:30616"/>
    </ligand>
</feature>
<feature type="binding site" evidence="1">
    <location>
        <position position="447"/>
    </location>
    <ligand>
        <name>L-aspartate</name>
        <dbReference type="ChEBI" id="CHEBI:29991"/>
    </ligand>
</feature>
<feature type="binding site" evidence="1">
    <location>
        <position position="477"/>
    </location>
    <ligand>
        <name>ATP</name>
        <dbReference type="ChEBI" id="CHEBI:30616"/>
    </ligand>
</feature>
<feature type="binding site" evidence="1">
    <location>
        <position position="484"/>
    </location>
    <ligand>
        <name>L-aspartate</name>
        <dbReference type="ChEBI" id="CHEBI:29991"/>
    </ligand>
</feature>
<feature type="binding site" evidence="1">
    <location>
        <begin position="529"/>
        <end position="532"/>
    </location>
    <ligand>
        <name>ATP</name>
        <dbReference type="ChEBI" id="CHEBI:30616"/>
    </ligand>
</feature>
<feature type="site" description="Important for tRNA non-discrimination" evidence="1">
    <location>
        <position position="30"/>
    </location>
</feature>
<feature type="site" description="Important for tRNA non-discrimination" evidence="1">
    <location>
        <position position="82"/>
    </location>
</feature>
<name>SYDND_CAMJR</name>
<accession>Q5HVD1</accession>
<dbReference type="EC" id="6.1.1.23" evidence="1"/>
<dbReference type="EMBL" id="CP000025">
    <property type="protein sequence ID" value="AAW34536.1"/>
    <property type="molecule type" value="Genomic_DNA"/>
</dbReference>
<dbReference type="RefSeq" id="WP_011049750.1">
    <property type="nucleotide sequence ID" value="NC_003912.7"/>
</dbReference>
<dbReference type="SMR" id="Q5HVD1"/>
<dbReference type="KEGG" id="cjr:CJE0743"/>
<dbReference type="HOGENOM" id="CLU_014330_3_2_7"/>
<dbReference type="GO" id="GO:0005737">
    <property type="term" value="C:cytoplasm"/>
    <property type="evidence" value="ECO:0007669"/>
    <property type="project" value="UniProtKB-SubCell"/>
</dbReference>
<dbReference type="GO" id="GO:0004815">
    <property type="term" value="F:aspartate-tRNA ligase activity"/>
    <property type="evidence" value="ECO:0007669"/>
    <property type="project" value="UniProtKB-UniRule"/>
</dbReference>
<dbReference type="GO" id="GO:0050560">
    <property type="term" value="F:aspartate-tRNA(Asn) ligase activity"/>
    <property type="evidence" value="ECO:0007669"/>
    <property type="project" value="UniProtKB-EC"/>
</dbReference>
<dbReference type="GO" id="GO:0005524">
    <property type="term" value="F:ATP binding"/>
    <property type="evidence" value="ECO:0007669"/>
    <property type="project" value="UniProtKB-UniRule"/>
</dbReference>
<dbReference type="GO" id="GO:0003676">
    <property type="term" value="F:nucleic acid binding"/>
    <property type="evidence" value="ECO:0007669"/>
    <property type="project" value="InterPro"/>
</dbReference>
<dbReference type="GO" id="GO:0006422">
    <property type="term" value="P:aspartyl-tRNA aminoacylation"/>
    <property type="evidence" value="ECO:0007669"/>
    <property type="project" value="UniProtKB-UniRule"/>
</dbReference>
<dbReference type="CDD" id="cd00777">
    <property type="entry name" value="AspRS_core"/>
    <property type="match status" value="1"/>
</dbReference>
<dbReference type="CDD" id="cd04317">
    <property type="entry name" value="EcAspRS_like_N"/>
    <property type="match status" value="1"/>
</dbReference>
<dbReference type="Gene3D" id="3.30.930.10">
    <property type="entry name" value="Bira Bifunctional Protein, Domain 2"/>
    <property type="match status" value="1"/>
</dbReference>
<dbReference type="Gene3D" id="3.30.1360.30">
    <property type="entry name" value="GAD-like domain"/>
    <property type="match status" value="1"/>
</dbReference>
<dbReference type="Gene3D" id="2.40.50.140">
    <property type="entry name" value="Nucleic acid-binding proteins"/>
    <property type="match status" value="1"/>
</dbReference>
<dbReference type="HAMAP" id="MF_00044">
    <property type="entry name" value="Asp_tRNA_synth_type1"/>
    <property type="match status" value="1"/>
</dbReference>
<dbReference type="InterPro" id="IPR004364">
    <property type="entry name" value="Aa-tRNA-synt_II"/>
</dbReference>
<dbReference type="InterPro" id="IPR006195">
    <property type="entry name" value="aa-tRNA-synth_II"/>
</dbReference>
<dbReference type="InterPro" id="IPR045864">
    <property type="entry name" value="aa-tRNA-synth_II/BPL/LPL"/>
</dbReference>
<dbReference type="InterPro" id="IPR004524">
    <property type="entry name" value="Asp-tRNA-ligase_1"/>
</dbReference>
<dbReference type="InterPro" id="IPR047089">
    <property type="entry name" value="Asp-tRNA-ligase_1_N"/>
</dbReference>
<dbReference type="InterPro" id="IPR002312">
    <property type="entry name" value="Asp/Asn-tRNA-synth_IIb"/>
</dbReference>
<dbReference type="InterPro" id="IPR047090">
    <property type="entry name" value="AspRS_core"/>
</dbReference>
<dbReference type="InterPro" id="IPR004115">
    <property type="entry name" value="GAD-like_sf"/>
</dbReference>
<dbReference type="InterPro" id="IPR029351">
    <property type="entry name" value="GAD_dom"/>
</dbReference>
<dbReference type="InterPro" id="IPR012340">
    <property type="entry name" value="NA-bd_OB-fold"/>
</dbReference>
<dbReference type="InterPro" id="IPR004365">
    <property type="entry name" value="NA-bd_OB_tRNA"/>
</dbReference>
<dbReference type="NCBIfam" id="TIGR00459">
    <property type="entry name" value="aspS_bact"/>
    <property type="match status" value="1"/>
</dbReference>
<dbReference type="NCBIfam" id="NF001750">
    <property type="entry name" value="PRK00476.1"/>
    <property type="match status" value="1"/>
</dbReference>
<dbReference type="PANTHER" id="PTHR22594:SF5">
    <property type="entry name" value="ASPARTATE--TRNA LIGASE, MITOCHONDRIAL"/>
    <property type="match status" value="1"/>
</dbReference>
<dbReference type="PANTHER" id="PTHR22594">
    <property type="entry name" value="ASPARTYL/LYSYL-TRNA SYNTHETASE"/>
    <property type="match status" value="1"/>
</dbReference>
<dbReference type="Pfam" id="PF02938">
    <property type="entry name" value="GAD"/>
    <property type="match status" value="1"/>
</dbReference>
<dbReference type="Pfam" id="PF00152">
    <property type="entry name" value="tRNA-synt_2"/>
    <property type="match status" value="1"/>
</dbReference>
<dbReference type="Pfam" id="PF01336">
    <property type="entry name" value="tRNA_anti-codon"/>
    <property type="match status" value="1"/>
</dbReference>
<dbReference type="PRINTS" id="PR01042">
    <property type="entry name" value="TRNASYNTHASP"/>
</dbReference>
<dbReference type="SUPFAM" id="SSF55681">
    <property type="entry name" value="Class II aaRS and biotin synthetases"/>
    <property type="match status" value="1"/>
</dbReference>
<dbReference type="SUPFAM" id="SSF55261">
    <property type="entry name" value="GAD domain-like"/>
    <property type="match status" value="1"/>
</dbReference>
<dbReference type="SUPFAM" id="SSF50249">
    <property type="entry name" value="Nucleic acid-binding proteins"/>
    <property type="match status" value="1"/>
</dbReference>
<dbReference type="PROSITE" id="PS50862">
    <property type="entry name" value="AA_TRNA_LIGASE_II"/>
    <property type="match status" value="1"/>
</dbReference>
<gene>
    <name evidence="1" type="primary">aspS</name>
    <name type="ordered locus">CJE0743</name>
</gene>